<name>DCTN3_MOUSE</name>
<reference evidence="5" key="1">
    <citation type="journal article" date="1998" name="Cell Motil. Cytoskeleton">
        <title>Identification and molecular characterization of the p24 dynactin light chain.</title>
        <authorList>
            <person name="Pfister K.K."/>
            <person name="Benashski S.E."/>
            <person name="Dillman J.F. III"/>
            <person name="Patel-King R.S."/>
            <person name="King S.M."/>
        </authorList>
    </citation>
    <scope>NUCLEOTIDE SEQUENCE [MRNA]</scope>
</reference>
<reference evidence="8" key="2">
    <citation type="journal article" date="2005" name="Science">
        <title>The transcriptional landscape of the mammalian genome.</title>
        <authorList>
            <person name="Carninci P."/>
            <person name="Kasukawa T."/>
            <person name="Katayama S."/>
            <person name="Gough J."/>
            <person name="Frith M.C."/>
            <person name="Maeda N."/>
            <person name="Oyama R."/>
            <person name="Ravasi T."/>
            <person name="Lenhard B."/>
            <person name="Wells C."/>
            <person name="Kodzius R."/>
            <person name="Shimokawa K."/>
            <person name="Bajic V.B."/>
            <person name="Brenner S.E."/>
            <person name="Batalov S."/>
            <person name="Forrest A.R."/>
            <person name="Zavolan M."/>
            <person name="Davis M.J."/>
            <person name="Wilming L.G."/>
            <person name="Aidinis V."/>
            <person name="Allen J.E."/>
            <person name="Ambesi-Impiombato A."/>
            <person name="Apweiler R."/>
            <person name="Aturaliya R.N."/>
            <person name="Bailey T.L."/>
            <person name="Bansal M."/>
            <person name="Baxter L."/>
            <person name="Beisel K.W."/>
            <person name="Bersano T."/>
            <person name="Bono H."/>
            <person name="Chalk A.M."/>
            <person name="Chiu K.P."/>
            <person name="Choudhary V."/>
            <person name="Christoffels A."/>
            <person name="Clutterbuck D.R."/>
            <person name="Crowe M.L."/>
            <person name="Dalla E."/>
            <person name="Dalrymple B.P."/>
            <person name="de Bono B."/>
            <person name="Della Gatta G."/>
            <person name="di Bernardo D."/>
            <person name="Down T."/>
            <person name="Engstrom P."/>
            <person name="Fagiolini M."/>
            <person name="Faulkner G."/>
            <person name="Fletcher C.F."/>
            <person name="Fukushima T."/>
            <person name="Furuno M."/>
            <person name="Futaki S."/>
            <person name="Gariboldi M."/>
            <person name="Georgii-Hemming P."/>
            <person name="Gingeras T.R."/>
            <person name="Gojobori T."/>
            <person name="Green R.E."/>
            <person name="Gustincich S."/>
            <person name="Harbers M."/>
            <person name="Hayashi Y."/>
            <person name="Hensch T.K."/>
            <person name="Hirokawa N."/>
            <person name="Hill D."/>
            <person name="Huminiecki L."/>
            <person name="Iacono M."/>
            <person name="Ikeo K."/>
            <person name="Iwama A."/>
            <person name="Ishikawa T."/>
            <person name="Jakt M."/>
            <person name="Kanapin A."/>
            <person name="Katoh M."/>
            <person name="Kawasawa Y."/>
            <person name="Kelso J."/>
            <person name="Kitamura H."/>
            <person name="Kitano H."/>
            <person name="Kollias G."/>
            <person name="Krishnan S.P."/>
            <person name="Kruger A."/>
            <person name="Kummerfeld S.K."/>
            <person name="Kurochkin I.V."/>
            <person name="Lareau L.F."/>
            <person name="Lazarevic D."/>
            <person name="Lipovich L."/>
            <person name="Liu J."/>
            <person name="Liuni S."/>
            <person name="McWilliam S."/>
            <person name="Madan Babu M."/>
            <person name="Madera M."/>
            <person name="Marchionni L."/>
            <person name="Matsuda H."/>
            <person name="Matsuzawa S."/>
            <person name="Miki H."/>
            <person name="Mignone F."/>
            <person name="Miyake S."/>
            <person name="Morris K."/>
            <person name="Mottagui-Tabar S."/>
            <person name="Mulder N."/>
            <person name="Nakano N."/>
            <person name="Nakauchi H."/>
            <person name="Ng P."/>
            <person name="Nilsson R."/>
            <person name="Nishiguchi S."/>
            <person name="Nishikawa S."/>
            <person name="Nori F."/>
            <person name="Ohara O."/>
            <person name="Okazaki Y."/>
            <person name="Orlando V."/>
            <person name="Pang K.C."/>
            <person name="Pavan W.J."/>
            <person name="Pavesi G."/>
            <person name="Pesole G."/>
            <person name="Petrovsky N."/>
            <person name="Piazza S."/>
            <person name="Reed J."/>
            <person name="Reid J.F."/>
            <person name="Ring B.Z."/>
            <person name="Ringwald M."/>
            <person name="Rost B."/>
            <person name="Ruan Y."/>
            <person name="Salzberg S.L."/>
            <person name="Sandelin A."/>
            <person name="Schneider C."/>
            <person name="Schoenbach C."/>
            <person name="Sekiguchi K."/>
            <person name="Semple C.A."/>
            <person name="Seno S."/>
            <person name="Sessa L."/>
            <person name="Sheng Y."/>
            <person name="Shibata Y."/>
            <person name="Shimada H."/>
            <person name="Shimada K."/>
            <person name="Silva D."/>
            <person name="Sinclair B."/>
            <person name="Sperling S."/>
            <person name="Stupka E."/>
            <person name="Sugiura K."/>
            <person name="Sultana R."/>
            <person name="Takenaka Y."/>
            <person name="Taki K."/>
            <person name="Tammoja K."/>
            <person name="Tan S.L."/>
            <person name="Tang S."/>
            <person name="Taylor M.S."/>
            <person name="Tegner J."/>
            <person name="Teichmann S.A."/>
            <person name="Ueda H.R."/>
            <person name="van Nimwegen E."/>
            <person name="Verardo R."/>
            <person name="Wei C.L."/>
            <person name="Yagi K."/>
            <person name="Yamanishi H."/>
            <person name="Zabarovsky E."/>
            <person name="Zhu S."/>
            <person name="Zimmer A."/>
            <person name="Hide W."/>
            <person name="Bult C."/>
            <person name="Grimmond S.M."/>
            <person name="Teasdale R.D."/>
            <person name="Liu E.T."/>
            <person name="Brusic V."/>
            <person name="Quackenbush J."/>
            <person name="Wahlestedt C."/>
            <person name="Mattick J.S."/>
            <person name="Hume D.A."/>
            <person name="Kai C."/>
            <person name="Sasaki D."/>
            <person name="Tomaru Y."/>
            <person name="Fukuda S."/>
            <person name="Kanamori-Katayama M."/>
            <person name="Suzuki M."/>
            <person name="Aoki J."/>
            <person name="Arakawa T."/>
            <person name="Iida J."/>
            <person name="Imamura K."/>
            <person name="Itoh M."/>
            <person name="Kato T."/>
            <person name="Kawaji H."/>
            <person name="Kawagashira N."/>
            <person name="Kawashima T."/>
            <person name="Kojima M."/>
            <person name="Kondo S."/>
            <person name="Konno H."/>
            <person name="Nakano K."/>
            <person name="Ninomiya N."/>
            <person name="Nishio T."/>
            <person name="Okada M."/>
            <person name="Plessy C."/>
            <person name="Shibata K."/>
            <person name="Shiraki T."/>
            <person name="Suzuki S."/>
            <person name="Tagami M."/>
            <person name="Waki K."/>
            <person name="Watahiki A."/>
            <person name="Okamura-Oho Y."/>
            <person name="Suzuki H."/>
            <person name="Kawai J."/>
            <person name="Hayashizaki Y."/>
        </authorList>
    </citation>
    <scope>NUCLEOTIDE SEQUENCE [LARGE SCALE MRNA]</scope>
    <source>
        <strain evidence="8">C57BL/6J</strain>
        <tissue evidence="8">Embryo</tissue>
        <tissue evidence="7">Kidney</tissue>
    </source>
</reference>
<reference evidence="6" key="3">
    <citation type="journal article" date="2004" name="Genome Res.">
        <title>The status, quality, and expansion of the NIH full-length cDNA project: the Mammalian Gene Collection (MGC).</title>
        <authorList>
            <consortium name="The MGC Project Team"/>
        </authorList>
    </citation>
    <scope>NUCLEOTIDE SEQUENCE [LARGE SCALE MRNA]</scope>
    <source>
        <tissue evidence="6">Testis</tissue>
    </source>
</reference>
<reference key="4">
    <citation type="journal article" date="2010" name="Cell">
        <title>A tissue-specific atlas of mouse protein phosphorylation and expression.</title>
        <authorList>
            <person name="Huttlin E.L."/>
            <person name="Jedrychowski M.P."/>
            <person name="Elias J.E."/>
            <person name="Goswami T."/>
            <person name="Rad R."/>
            <person name="Beausoleil S.A."/>
            <person name="Villen J."/>
            <person name="Haas W."/>
            <person name="Sowa M.E."/>
            <person name="Gygi S.P."/>
        </authorList>
    </citation>
    <scope>IDENTIFICATION BY MASS SPECTROMETRY [LARGE SCALE ANALYSIS]</scope>
    <source>
        <tissue>Brain</tissue>
        <tissue>Brown adipose tissue</tissue>
        <tissue>Heart</tissue>
        <tissue>Kidney</tissue>
        <tissue>Liver</tissue>
        <tissue>Lung</tissue>
        <tissue>Pancreas</tissue>
        <tissue>Spleen</tissue>
        <tissue>Testis</tissue>
    </source>
</reference>
<gene>
    <name evidence="9" type="primary">Dctn3</name>
</gene>
<evidence type="ECO:0000250" key="1">
    <source>
        <dbReference type="UniProtKB" id="F1SEC0"/>
    </source>
</evidence>
<evidence type="ECO:0000250" key="2">
    <source>
        <dbReference type="UniProtKB" id="O75935"/>
    </source>
</evidence>
<evidence type="ECO:0000255" key="3"/>
<evidence type="ECO:0000305" key="4"/>
<evidence type="ECO:0000312" key="5">
    <source>
        <dbReference type="EMBL" id="AAD16226.1"/>
    </source>
</evidence>
<evidence type="ECO:0000312" key="6">
    <source>
        <dbReference type="EMBL" id="AAH61120.1"/>
    </source>
</evidence>
<evidence type="ECO:0000312" key="7">
    <source>
        <dbReference type="EMBL" id="BAB22307.1"/>
    </source>
</evidence>
<evidence type="ECO:0000312" key="8">
    <source>
        <dbReference type="EMBL" id="BAB27872.1"/>
    </source>
</evidence>
<evidence type="ECO:0000312" key="9">
    <source>
        <dbReference type="MGI" id="MGI:1859251"/>
    </source>
</evidence>
<organism>
    <name type="scientific">Mus musculus</name>
    <name type="common">Mouse</name>
    <dbReference type="NCBI Taxonomy" id="10090"/>
    <lineage>
        <taxon>Eukaryota</taxon>
        <taxon>Metazoa</taxon>
        <taxon>Chordata</taxon>
        <taxon>Craniata</taxon>
        <taxon>Vertebrata</taxon>
        <taxon>Euteleostomi</taxon>
        <taxon>Mammalia</taxon>
        <taxon>Eutheria</taxon>
        <taxon>Euarchontoglires</taxon>
        <taxon>Glires</taxon>
        <taxon>Rodentia</taxon>
        <taxon>Myomorpha</taxon>
        <taxon>Muroidea</taxon>
        <taxon>Muridae</taxon>
        <taxon>Murinae</taxon>
        <taxon>Mus</taxon>
        <taxon>Mus</taxon>
    </lineage>
</organism>
<proteinExistence type="evidence at protein level"/>
<accession>Q9Z0Y1</accession>
<accession>Q9CR43</accession>
<accession>Q9D039</accession>
<protein>
    <recommendedName>
        <fullName>Dynactin subunit 3</fullName>
    </recommendedName>
    <alternativeName>
        <fullName>Dynactin light chain p24</fullName>
    </alternativeName>
</protein>
<sequence>MAALTDVQRLQSRVEELERWVYGPGGTRGSRKVADGLVKVQVALGNIASKRERVKILYKKIEDLIKYLDPEYIDRIAIPEASKLQFILAEEQFILSQVALLEQVNALVPVLDSASIKAVPEHAARLQRLAQIHIQQQDQCVAITEESKALLEGYNKTTMLLSKQFVQWDELLCQLEAAKQVKPAEE</sequence>
<keyword id="KW-0007">Acetylation</keyword>
<keyword id="KW-0131">Cell cycle</keyword>
<keyword id="KW-0132">Cell division</keyword>
<keyword id="KW-0137">Centromere</keyword>
<keyword id="KW-0158">Chromosome</keyword>
<keyword id="KW-0175">Coiled coil</keyword>
<keyword id="KW-0963">Cytoplasm</keyword>
<keyword id="KW-0206">Cytoskeleton</keyword>
<keyword id="KW-0995">Kinetochore</keyword>
<keyword id="KW-0498">Mitosis</keyword>
<keyword id="KW-1185">Reference proteome</keyword>
<comment type="function">
    <text evidence="1 2">Part of the dynactin complex that activates the molecular motor dynein for ultra-processive transport along microtubules (By similarity). Together with dynein may be involved in spindle assembly and cytokinesis (By similarity).</text>
</comment>
<comment type="subunit">
    <text evidence="1">Subunit of dynactin, a multiprotein complex part of a tripartite complex with dynein and a adapter, such as BICDL1, BICD2 or HOOK3. The dynactin complex is built around ACTR1A/ACTB filament and consists of an actin-related filament composed of a shoulder domain, a pointed end and a barbed end. Its length is defined by its flexible shoulder domain. The soulder is composed of 2 DCTN1 subunits, 4 DCTN2 and 2 DCTN3. The 4 DCNT2 (via N-terminus) bind the ACTR1A filament and act as molecular rulers to determine the length. The pointed end is important for binding dynein-dynactin cargo adapters. Consists of 4 subunits: ACTR10, DCNT4, DCTN5 and DCTN6. The barbed end is composed of a CAPZA1:CAPZB heterodimers, which binds ACTR1A/ACTB filament and dynactin and stabilizes dynactin.</text>
</comment>
<comment type="subcellular location">
    <subcellularLocation>
        <location evidence="2">Cytoplasm</location>
    </subcellularLocation>
    <subcellularLocation>
        <location evidence="2">Cytoplasm</location>
        <location evidence="2">Cytoskeleton</location>
        <location evidence="2">Microtubule organizing center</location>
        <location evidence="2">Centrosome</location>
    </subcellularLocation>
    <subcellularLocation>
        <location evidence="2">Chromosome</location>
        <location evidence="2">Centromere</location>
        <location evidence="2">Kinetochore</location>
    </subcellularLocation>
    <subcellularLocation>
        <location evidence="2">Cytoplasm</location>
        <location evidence="2">Cytoskeleton</location>
        <location evidence="2">Spindle</location>
    </subcellularLocation>
    <subcellularLocation>
        <location evidence="2">Cleavage furrow</location>
    </subcellularLocation>
    <subcellularLocation>
        <location evidence="2">Midbody</location>
    </subcellularLocation>
    <text evidence="2">Localizes to punctate cytoplasmic structures and to the centrosome during interphase, and to kinetochores and to spindle poles throughout mitosis. Colocalizes with dynein to the cleavage furrow and to midbody of dividing cells.</text>
</comment>
<comment type="similarity">
    <text evidence="4">Belongs to the dynactin subunit 3 family.</text>
</comment>
<dbReference type="EMBL" id="AF098508">
    <property type="protein sequence ID" value="AAD16226.1"/>
    <property type="molecule type" value="mRNA"/>
</dbReference>
<dbReference type="EMBL" id="AK003255">
    <property type="protein sequence ID" value="BAB22671.1"/>
    <property type="molecule type" value="mRNA"/>
</dbReference>
<dbReference type="EMBL" id="AK002720">
    <property type="protein sequence ID" value="BAB22307.1"/>
    <property type="molecule type" value="mRNA"/>
</dbReference>
<dbReference type="EMBL" id="AK011840">
    <property type="protein sequence ID" value="BAB27872.1"/>
    <property type="molecule type" value="mRNA"/>
</dbReference>
<dbReference type="EMBL" id="AK159344">
    <property type="protein sequence ID" value="BAE35006.1"/>
    <property type="molecule type" value="mRNA"/>
</dbReference>
<dbReference type="EMBL" id="BC061120">
    <property type="protein sequence ID" value="AAH61120.1"/>
    <property type="molecule type" value="mRNA"/>
</dbReference>
<dbReference type="CCDS" id="CCDS18069.1"/>
<dbReference type="RefSeq" id="NP_001153037.1">
    <property type="nucleotide sequence ID" value="NM_001159565.1"/>
</dbReference>
<dbReference type="RefSeq" id="NP_058586.3">
    <property type="nucleotide sequence ID" value="NM_016890.4"/>
</dbReference>
<dbReference type="SMR" id="Q9Z0Y1"/>
<dbReference type="BioGRID" id="207318">
    <property type="interactions" value="84"/>
</dbReference>
<dbReference type="FunCoup" id="Q9Z0Y1">
    <property type="interactions" value="1742"/>
</dbReference>
<dbReference type="IntAct" id="Q9Z0Y1">
    <property type="interactions" value="74"/>
</dbReference>
<dbReference type="MINT" id="Q9Z0Y1"/>
<dbReference type="STRING" id="10090.ENSMUSP00000030158"/>
<dbReference type="iPTMnet" id="Q9Z0Y1"/>
<dbReference type="PhosphoSitePlus" id="Q9Z0Y1"/>
<dbReference type="SwissPalm" id="Q9Z0Y1"/>
<dbReference type="jPOST" id="Q9Z0Y1"/>
<dbReference type="PaxDb" id="10090-ENSMUSP00000030158"/>
<dbReference type="PeptideAtlas" id="Q9Z0Y1"/>
<dbReference type="ProteomicsDB" id="279397"/>
<dbReference type="Pumba" id="Q9Z0Y1"/>
<dbReference type="Antibodypedia" id="25511">
    <property type="antibodies" value="197 antibodies from 29 providers"/>
</dbReference>
<dbReference type="DNASU" id="53598"/>
<dbReference type="Ensembl" id="ENSMUST00000030158.11">
    <property type="protein sequence ID" value="ENSMUSP00000030158.5"/>
    <property type="gene ID" value="ENSMUSG00000028447.12"/>
</dbReference>
<dbReference type="GeneID" id="53598"/>
<dbReference type="KEGG" id="mmu:53598"/>
<dbReference type="UCSC" id="uc008sji.2">
    <property type="organism name" value="mouse"/>
</dbReference>
<dbReference type="AGR" id="MGI:1859251"/>
<dbReference type="CTD" id="11258"/>
<dbReference type="MGI" id="MGI:1859251">
    <property type="gene designation" value="Dctn3"/>
</dbReference>
<dbReference type="VEuPathDB" id="HostDB:ENSMUSG00000028447"/>
<dbReference type="eggNOG" id="ENOG502RYZ0">
    <property type="taxonomic scope" value="Eukaryota"/>
</dbReference>
<dbReference type="GeneTree" id="ENSGT00390000016210"/>
<dbReference type="HOGENOM" id="CLU_121487_1_0_1"/>
<dbReference type="InParanoid" id="Q9Z0Y1"/>
<dbReference type="OMA" id="IQQQEQC"/>
<dbReference type="OrthoDB" id="16729at2759"/>
<dbReference type="PhylomeDB" id="Q9Z0Y1"/>
<dbReference type="TreeFam" id="TF105248"/>
<dbReference type="Reactome" id="R-MMU-2132295">
    <property type="pathway name" value="MHC class II antigen presentation"/>
</dbReference>
<dbReference type="Reactome" id="R-MMU-2565942">
    <property type="pathway name" value="Regulation of PLK1 Activity at G2/M Transition"/>
</dbReference>
<dbReference type="Reactome" id="R-MMU-3371497">
    <property type="pathway name" value="HSP90 chaperone cycle for steroid hormone receptors (SHR) in the presence of ligand"/>
</dbReference>
<dbReference type="Reactome" id="R-MMU-380259">
    <property type="pathway name" value="Loss of Nlp from mitotic centrosomes"/>
</dbReference>
<dbReference type="Reactome" id="R-MMU-380270">
    <property type="pathway name" value="Recruitment of mitotic centrosome proteins and complexes"/>
</dbReference>
<dbReference type="Reactome" id="R-MMU-380284">
    <property type="pathway name" value="Loss of proteins required for interphase microtubule organization from the centrosome"/>
</dbReference>
<dbReference type="Reactome" id="R-MMU-380320">
    <property type="pathway name" value="Recruitment of NuMA to mitotic centrosomes"/>
</dbReference>
<dbReference type="Reactome" id="R-MMU-5620912">
    <property type="pathway name" value="Anchoring of the basal body to the plasma membrane"/>
</dbReference>
<dbReference type="Reactome" id="R-MMU-6807878">
    <property type="pathway name" value="COPI-mediated anterograde transport"/>
</dbReference>
<dbReference type="Reactome" id="R-MMU-6811436">
    <property type="pathway name" value="COPI-independent Golgi-to-ER retrograde traffic"/>
</dbReference>
<dbReference type="Reactome" id="R-MMU-8854518">
    <property type="pathway name" value="AURKA Activation by TPX2"/>
</dbReference>
<dbReference type="BioGRID-ORCS" id="53598">
    <property type="hits" value="25 hits in 78 CRISPR screens"/>
</dbReference>
<dbReference type="CD-CODE" id="01CA17F3">
    <property type="entry name" value="Centrosome"/>
</dbReference>
<dbReference type="CD-CODE" id="CE726F99">
    <property type="entry name" value="Postsynaptic density"/>
</dbReference>
<dbReference type="ChiTaRS" id="Dctn3">
    <property type="organism name" value="mouse"/>
</dbReference>
<dbReference type="PRO" id="PR:Q9Z0Y1"/>
<dbReference type="Proteomes" id="UP000000589">
    <property type="component" value="Chromosome 4"/>
</dbReference>
<dbReference type="RNAct" id="Q9Z0Y1">
    <property type="molecule type" value="protein"/>
</dbReference>
<dbReference type="Bgee" id="ENSMUSG00000028447">
    <property type="expression patterns" value="Expressed in saccule of membranous labyrinth and 261 other cell types or tissues"/>
</dbReference>
<dbReference type="ExpressionAtlas" id="Q9Z0Y1">
    <property type="expression patterns" value="baseline and differential"/>
</dbReference>
<dbReference type="GO" id="GO:0005813">
    <property type="term" value="C:centrosome"/>
    <property type="evidence" value="ECO:0007669"/>
    <property type="project" value="UniProtKB-SubCell"/>
</dbReference>
<dbReference type="GO" id="GO:0032154">
    <property type="term" value="C:cleavage furrow"/>
    <property type="evidence" value="ECO:0007669"/>
    <property type="project" value="UniProtKB-SubCell"/>
</dbReference>
<dbReference type="GO" id="GO:0005829">
    <property type="term" value="C:cytosol"/>
    <property type="evidence" value="ECO:0007669"/>
    <property type="project" value="Ensembl"/>
</dbReference>
<dbReference type="GO" id="GO:0005869">
    <property type="term" value="C:dynactin complex"/>
    <property type="evidence" value="ECO:0000314"/>
    <property type="project" value="MGI"/>
</dbReference>
<dbReference type="GO" id="GO:0000776">
    <property type="term" value="C:kinetochore"/>
    <property type="evidence" value="ECO:0007669"/>
    <property type="project" value="UniProtKB-KW"/>
</dbReference>
<dbReference type="GO" id="GO:0005875">
    <property type="term" value="C:microtubule associated complex"/>
    <property type="evidence" value="ECO:0000314"/>
    <property type="project" value="MGI"/>
</dbReference>
<dbReference type="GO" id="GO:0030496">
    <property type="term" value="C:midbody"/>
    <property type="evidence" value="ECO:0007669"/>
    <property type="project" value="UniProtKB-SubCell"/>
</dbReference>
<dbReference type="GO" id="GO:0005730">
    <property type="term" value="C:nucleolus"/>
    <property type="evidence" value="ECO:0007669"/>
    <property type="project" value="Ensembl"/>
</dbReference>
<dbReference type="GO" id="GO:0048471">
    <property type="term" value="C:perinuclear region of cytoplasm"/>
    <property type="evidence" value="ECO:0000250"/>
    <property type="project" value="UniProtKB"/>
</dbReference>
<dbReference type="GO" id="GO:0005819">
    <property type="term" value="C:spindle"/>
    <property type="evidence" value="ECO:0007669"/>
    <property type="project" value="UniProtKB-SubCell"/>
</dbReference>
<dbReference type="GO" id="GO:0061640">
    <property type="term" value="P:cytoskeleton-dependent cytokinesis"/>
    <property type="evidence" value="ECO:0000250"/>
    <property type="project" value="UniProtKB"/>
</dbReference>
<dbReference type="GO" id="GO:0007017">
    <property type="term" value="P:microtubule-based process"/>
    <property type="evidence" value="ECO:0000314"/>
    <property type="project" value="MGI"/>
</dbReference>
<dbReference type="InterPro" id="IPR009991">
    <property type="entry name" value="DCTN3"/>
</dbReference>
<dbReference type="PANTHER" id="PTHR28360">
    <property type="entry name" value="DYNACTIN SUBUNIT 3"/>
    <property type="match status" value="1"/>
</dbReference>
<dbReference type="PANTHER" id="PTHR28360:SF1">
    <property type="entry name" value="DYNACTIN SUBUNIT 3"/>
    <property type="match status" value="1"/>
</dbReference>
<dbReference type="Pfam" id="PF07426">
    <property type="entry name" value="Dynactin_p22"/>
    <property type="match status" value="1"/>
</dbReference>
<feature type="initiator methionine" description="Removed" evidence="2">
    <location>
        <position position="1"/>
    </location>
</feature>
<feature type="chain" id="PRO_0000225604" description="Dynactin subunit 3">
    <location>
        <begin position="2"/>
        <end position="186"/>
    </location>
</feature>
<feature type="coiled-coil region" evidence="3">
    <location>
        <begin position="46"/>
        <end position="66"/>
    </location>
</feature>
<feature type="modified residue" description="N-acetylalanine" evidence="2">
    <location>
        <position position="2"/>
    </location>
</feature>
<feature type="sequence conflict" description="In Ref. 2; BAB27872." evidence="4" ref="2">
    <original>A</original>
    <variation>G</variation>
    <location>
        <position position="3"/>
    </location>
</feature>
<feature type="sequence conflict" description="In Ref. 1; AAD16226." evidence="4" ref="1">
    <original>Q</original>
    <variation>E</variation>
    <location>
        <position position="131"/>
    </location>
</feature>